<reference key="1">
    <citation type="submission" date="1998-09" db="EMBL/GenBank/DDBJ databases">
        <title>Cloning of a sugar transporter gene, a G-beta subunit like gene and three novel genes in human chromosome 9q34.</title>
        <authorList>
            <person name="Young J.M."/>
            <person name="Woodward K.J."/>
            <person name="Aziz S."/>
            <person name="Burley M."/>
            <person name="Kwiatkowski D.J."/>
            <person name="Povey S."/>
        </authorList>
    </citation>
    <scope>NUCLEOTIDE SEQUENCE [MRNA] (ISOFORM 2)</scope>
    <source>
        <tissue>Uterus</tissue>
    </source>
</reference>
<reference key="2">
    <citation type="journal article" date="2004" name="Nat. Genet.">
        <title>Complete sequencing and characterization of 21,243 full-length human cDNAs.</title>
        <authorList>
            <person name="Ota T."/>
            <person name="Suzuki Y."/>
            <person name="Nishikawa T."/>
            <person name="Otsuki T."/>
            <person name="Sugiyama T."/>
            <person name="Irie R."/>
            <person name="Wakamatsu A."/>
            <person name="Hayashi K."/>
            <person name="Sato H."/>
            <person name="Nagai K."/>
            <person name="Kimura K."/>
            <person name="Makita H."/>
            <person name="Sekine M."/>
            <person name="Obayashi M."/>
            <person name="Nishi T."/>
            <person name="Shibahara T."/>
            <person name="Tanaka T."/>
            <person name="Ishii S."/>
            <person name="Yamamoto J."/>
            <person name="Saito K."/>
            <person name="Kawai Y."/>
            <person name="Isono Y."/>
            <person name="Nakamura Y."/>
            <person name="Nagahari K."/>
            <person name="Murakami K."/>
            <person name="Yasuda T."/>
            <person name="Iwayanagi T."/>
            <person name="Wagatsuma M."/>
            <person name="Shiratori A."/>
            <person name="Sudo H."/>
            <person name="Hosoiri T."/>
            <person name="Kaku Y."/>
            <person name="Kodaira H."/>
            <person name="Kondo H."/>
            <person name="Sugawara M."/>
            <person name="Takahashi M."/>
            <person name="Kanda K."/>
            <person name="Yokoi T."/>
            <person name="Furuya T."/>
            <person name="Kikkawa E."/>
            <person name="Omura Y."/>
            <person name="Abe K."/>
            <person name="Kamihara K."/>
            <person name="Katsuta N."/>
            <person name="Sato K."/>
            <person name="Tanikawa M."/>
            <person name="Yamazaki M."/>
            <person name="Ninomiya K."/>
            <person name="Ishibashi T."/>
            <person name="Yamashita H."/>
            <person name="Murakawa K."/>
            <person name="Fujimori K."/>
            <person name="Tanai H."/>
            <person name="Kimata M."/>
            <person name="Watanabe M."/>
            <person name="Hiraoka S."/>
            <person name="Chiba Y."/>
            <person name="Ishida S."/>
            <person name="Ono Y."/>
            <person name="Takiguchi S."/>
            <person name="Watanabe S."/>
            <person name="Yosida M."/>
            <person name="Hotuta T."/>
            <person name="Kusano J."/>
            <person name="Kanehori K."/>
            <person name="Takahashi-Fujii A."/>
            <person name="Hara H."/>
            <person name="Tanase T.-O."/>
            <person name="Nomura Y."/>
            <person name="Togiya S."/>
            <person name="Komai F."/>
            <person name="Hara R."/>
            <person name="Takeuchi K."/>
            <person name="Arita M."/>
            <person name="Imose N."/>
            <person name="Musashino K."/>
            <person name="Yuuki H."/>
            <person name="Oshima A."/>
            <person name="Sasaki N."/>
            <person name="Aotsuka S."/>
            <person name="Yoshikawa Y."/>
            <person name="Matsunawa H."/>
            <person name="Ichihara T."/>
            <person name="Shiohata N."/>
            <person name="Sano S."/>
            <person name="Moriya S."/>
            <person name="Momiyama H."/>
            <person name="Satoh N."/>
            <person name="Takami S."/>
            <person name="Terashima Y."/>
            <person name="Suzuki O."/>
            <person name="Nakagawa S."/>
            <person name="Senoh A."/>
            <person name="Mizoguchi H."/>
            <person name="Goto Y."/>
            <person name="Shimizu F."/>
            <person name="Wakebe H."/>
            <person name="Hishigaki H."/>
            <person name="Watanabe T."/>
            <person name="Sugiyama A."/>
            <person name="Takemoto M."/>
            <person name="Kawakami B."/>
            <person name="Yamazaki M."/>
            <person name="Watanabe K."/>
            <person name="Kumagai A."/>
            <person name="Itakura S."/>
            <person name="Fukuzumi Y."/>
            <person name="Fujimori Y."/>
            <person name="Komiyama M."/>
            <person name="Tashiro H."/>
            <person name="Tanigami A."/>
            <person name="Fujiwara T."/>
            <person name="Ono T."/>
            <person name="Yamada K."/>
            <person name="Fujii Y."/>
            <person name="Ozaki K."/>
            <person name="Hirao M."/>
            <person name="Ohmori Y."/>
            <person name="Kawabata A."/>
            <person name="Hikiji T."/>
            <person name="Kobatake N."/>
            <person name="Inagaki H."/>
            <person name="Ikema Y."/>
            <person name="Okamoto S."/>
            <person name="Okitani R."/>
            <person name="Kawakami T."/>
            <person name="Noguchi S."/>
            <person name="Itoh T."/>
            <person name="Shigeta K."/>
            <person name="Senba T."/>
            <person name="Matsumura K."/>
            <person name="Nakajima Y."/>
            <person name="Mizuno T."/>
            <person name="Morinaga M."/>
            <person name="Sasaki M."/>
            <person name="Togashi T."/>
            <person name="Oyama M."/>
            <person name="Hata H."/>
            <person name="Watanabe M."/>
            <person name="Komatsu T."/>
            <person name="Mizushima-Sugano J."/>
            <person name="Satoh T."/>
            <person name="Shirai Y."/>
            <person name="Takahashi Y."/>
            <person name="Nakagawa K."/>
            <person name="Okumura K."/>
            <person name="Nagase T."/>
            <person name="Nomura N."/>
            <person name="Kikuchi H."/>
            <person name="Masuho Y."/>
            <person name="Yamashita R."/>
            <person name="Nakai K."/>
            <person name="Yada T."/>
            <person name="Nakamura Y."/>
            <person name="Ohara O."/>
            <person name="Isogai T."/>
            <person name="Sugano S."/>
        </authorList>
    </citation>
    <scope>NUCLEOTIDE SEQUENCE [LARGE SCALE MRNA] (ISOFORM 1)</scope>
    <source>
        <tissue>Thyroid</tissue>
    </source>
</reference>
<reference key="3">
    <citation type="submission" date="2004-06" db="EMBL/GenBank/DDBJ databases">
        <title>Cloning of human full open reading frames in Gateway(TM) system entry vector (pDONR201).</title>
        <authorList>
            <person name="Ebert L."/>
            <person name="Schick M."/>
            <person name="Neubert P."/>
            <person name="Schatten R."/>
            <person name="Henze S."/>
            <person name="Korn B."/>
        </authorList>
    </citation>
    <scope>NUCLEOTIDE SEQUENCE [LARGE SCALE MRNA] (ISOFORM 2)</scope>
</reference>
<reference key="4">
    <citation type="journal article" date="2004" name="Nature">
        <title>DNA sequence and analysis of human chromosome 9.</title>
        <authorList>
            <person name="Humphray S.J."/>
            <person name="Oliver K."/>
            <person name="Hunt A.R."/>
            <person name="Plumb R.W."/>
            <person name="Loveland J.E."/>
            <person name="Howe K.L."/>
            <person name="Andrews T.D."/>
            <person name="Searle S."/>
            <person name="Hunt S.E."/>
            <person name="Scott C.E."/>
            <person name="Jones M.C."/>
            <person name="Ainscough R."/>
            <person name="Almeida J.P."/>
            <person name="Ambrose K.D."/>
            <person name="Ashwell R.I.S."/>
            <person name="Babbage A.K."/>
            <person name="Babbage S."/>
            <person name="Bagguley C.L."/>
            <person name="Bailey J."/>
            <person name="Banerjee R."/>
            <person name="Barker D.J."/>
            <person name="Barlow K.F."/>
            <person name="Bates K."/>
            <person name="Beasley H."/>
            <person name="Beasley O."/>
            <person name="Bird C.P."/>
            <person name="Bray-Allen S."/>
            <person name="Brown A.J."/>
            <person name="Brown J.Y."/>
            <person name="Burford D."/>
            <person name="Burrill W."/>
            <person name="Burton J."/>
            <person name="Carder C."/>
            <person name="Carter N.P."/>
            <person name="Chapman J.C."/>
            <person name="Chen Y."/>
            <person name="Clarke G."/>
            <person name="Clark S.Y."/>
            <person name="Clee C.M."/>
            <person name="Clegg S."/>
            <person name="Collier R.E."/>
            <person name="Corby N."/>
            <person name="Crosier M."/>
            <person name="Cummings A.T."/>
            <person name="Davies J."/>
            <person name="Dhami P."/>
            <person name="Dunn M."/>
            <person name="Dutta I."/>
            <person name="Dyer L.W."/>
            <person name="Earthrowl M.E."/>
            <person name="Faulkner L."/>
            <person name="Fleming C.J."/>
            <person name="Frankish A."/>
            <person name="Frankland J.A."/>
            <person name="French L."/>
            <person name="Fricker D.G."/>
            <person name="Garner P."/>
            <person name="Garnett J."/>
            <person name="Ghori J."/>
            <person name="Gilbert J.G.R."/>
            <person name="Glison C."/>
            <person name="Grafham D.V."/>
            <person name="Gribble S."/>
            <person name="Griffiths C."/>
            <person name="Griffiths-Jones S."/>
            <person name="Grocock R."/>
            <person name="Guy J."/>
            <person name="Hall R.E."/>
            <person name="Hammond S."/>
            <person name="Harley J.L."/>
            <person name="Harrison E.S.I."/>
            <person name="Hart E.A."/>
            <person name="Heath P.D."/>
            <person name="Henderson C.D."/>
            <person name="Hopkins B.L."/>
            <person name="Howard P.J."/>
            <person name="Howden P.J."/>
            <person name="Huckle E."/>
            <person name="Johnson C."/>
            <person name="Johnson D."/>
            <person name="Joy A.A."/>
            <person name="Kay M."/>
            <person name="Keenan S."/>
            <person name="Kershaw J.K."/>
            <person name="Kimberley A.M."/>
            <person name="King A."/>
            <person name="Knights A."/>
            <person name="Laird G.K."/>
            <person name="Langford C."/>
            <person name="Lawlor S."/>
            <person name="Leongamornlert D.A."/>
            <person name="Leversha M."/>
            <person name="Lloyd C."/>
            <person name="Lloyd D.M."/>
            <person name="Lovell J."/>
            <person name="Martin S."/>
            <person name="Mashreghi-Mohammadi M."/>
            <person name="Matthews L."/>
            <person name="McLaren S."/>
            <person name="McLay K.E."/>
            <person name="McMurray A."/>
            <person name="Milne S."/>
            <person name="Nickerson T."/>
            <person name="Nisbett J."/>
            <person name="Nordsiek G."/>
            <person name="Pearce A.V."/>
            <person name="Peck A.I."/>
            <person name="Porter K.M."/>
            <person name="Pandian R."/>
            <person name="Pelan S."/>
            <person name="Phillimore B."/>
            <person name="Povey S."/>
            <person name="Ramsey Y."/>
            <person name="Rand V."/>
            <person name="Scharfe M."/>
            <person name="Sehra H.K."/>
            <person name="Shownkeen R."/>
            <person name="Sims S.K."/>
            <person name="Skuce C.D."/>
            <person name="Smith M."/>
            <person name="Steward C.A."/>
            <person name="Swarbreck D."/>
            <person name="Sycamore N."/>
            <person name="Tester J."/>
            <person name="Thorpe A."/>
            <person name="Tracey A."/>
            <person name="Tromans A."/>
            <person name="Thomas D.W."/>
            <person name="Wall M."/>
            <person name="Wallis J.M."/>
            <person name="West A.P."/>
            <person name="Whitehead S.L."/>
            <person name="Willey D.L."/>
            <person name="Williams S.A."/>
            <person name="Wilming L."/>
            <person name="Wray P.W."/>
            <person name="Young L."/>
            <person name="Ashurst J.L."/>
            <person name="Coulson A."/>
            <person name="Blocker H."/>
            <person name="Durbin R.M."/>
            <person name="Sulston J.E."/>
            <person name="Hubbard T."/>
            <person name="Jackson M.J."/>
            <person name="Bentley D.R."/>
            <person name="Beck S."/>
            <person name="Rogers J."/>
            <person name="Dunham I."/>
        </authorList>
    </citation>
    <scope>NUCLEOTIDE SEQUENCE [LARGE SCALE GENOMIC DNA]</scope>
</reference>
<reference key="5">
    <citation type="journal article" date="2004" name="Genome Res.">
        <title>The status, quality, and expansion of the NIH full-length cDNA project: the Mammalian Gene Collection (MGC).</title>
        <authorList>
            <consortium name="The MGC Project Team"/>
        </authorList>
    </citation>
    <scope>NUCLEOTIDE SEQUENCE [LARGE SCALE MRNA] (ISOFORM 1)</scope>
    <source>
        <tissue>Testis</tissue>
    </source>
</reference>
<reference evidence="8" key="6">
    <citation type="journal article" date="2022" name="Proc. Natl. Acad. Sci. U.S.A.">
        <title>SPACA9 is a lumenal protein of human ciliary singlet and doublet microtubules.</title>
        <authorList>
            <person name="Gui M."/>
            <person name="Croft J.T."/>
            <person name="Zabeo D."/>
            <person name="Acharya V."/>
            <person name="Kollman J.M."/>
            <person name="Burgoyne T."/>
            <person name="Hoog J.L."/>
            <person name="Brown A."/>
        </authorList>
    </citation>
    <scope>STRUCTURE BY ELECTRON MICROSCOPY (3.60 ANGSTROMS) IN ASSOCIATION WITH MICROTUBULES</scope>
    <scope>SUBCELLULAR LOCATION</scope>
    <scope>FUNCTION</scope>
</reference>
<dbReference type="EMBL" id="AJ011375">
    <property type="protein sequence ID" value="CAB66158.1"/>
    <property type="molecule type" value="mRNA"/>
</dbReference>
<dbReference type="EMBL" id="AK075259">
    <property type="protein sequence ID" value="BAC11503.1"/>
    <property type="molecule type" value="mRNA"/>
</dbReference>
<dbReference type="EMBL" id="CR457210">
    <property type="protein sequence ID" value="CAG33491.1"/>
    <property type="molecule type" value="mRNA"/>
</dbReference>
<dbReference type="EMBL" id="AL445645">
    <property type="status" value="NOT_ANNOTATED_CDS"/>
    <property type="molecule type" value="Genomic_DNA"/>
</dbReference>
<dbReference type="EMBL" id="BC012940">
    <property type="protein sequence ID" value="AAH12940.1"/>
    <property type="molecule type" value="mRNA"/>
</dbReference>
<dbReference type="CCDS" id="CCDS6955.1">
    <molecule id="Q96E40-2"/>
</dbReference>
<dbReference type="CCDS" id="CCDS83434.1">
    <molecule id="Q96E40-1"/>
</dbReference>
<dbReference type="RefSeq" id="NP_001303826.1">
    <molecule id="Q96E40-1"/>
    <property type="nucleotide sequence ID" value="NM_001316897.2"/>
</dbReference>
<dbReference type="RefSeq" id="NP_001303827.1">
    <molecule id="Q96E40-1"/>
    <property type="nucleotide sequence ID" value="NM_001316898.2"/>
</dbReference>
<dbReference type="RefSeq" id="NP_001303829.1">
    <property type="nucleotide sequence ID" value="NM_001316900.1"/>
</dbReference>
<dbReference type="RefSeq" id="NP_061829.3">
    <molecule id="Q96E40-2"/>
    <property type="nucleotide sequence ID" value="NM_018956.4"/>
</dbReference>
<dbReference type="RefSeq" id="XP_024303164.1">
    <molecule id="Q96E40-1"/>
    <property type="nucleotide sequence ID" value="XM_024447396.2"/>
</dbReference>
<dbReference type="RefSeq" id="XP_024303165.1">
    <molecule id="Q96E40-2"/>
    <property type="nucleotide sequence ID" value="XM_024447397.2"/>
</dbReference>
<dbReference type="RefSeq" id="XP_047278653.1">
    <molecule id="Q96E40-2"/>
    <property type="nucleotide sequence ID" value="XM_047422697.1"/>
</dbReference>
<dbReference type="RefSeq" id="XP_054217829.1">
    <molecule id="Q96E40-1"/>
    <property type="nucleotide sequence ID" value="XM_054361854.1"/>
</dbReference>
<dbReference type="RefSeq" id="XP_054217831.1">
    <molecule id="Q96E40-2"/>
    <property type="nucleotide sequence ID" value="XM_054361856.1"/>
</dbReference>
<dbReference type="RefSeq" id="XP_054217832.1">
    <molecule id="Q96E40-2"/>
    <property type="nucleotide sequence ID" value="XM_054361857.1"/>
</dbReference>
<dbReference type="PDB" id="7UN1">
    <property type="method" value="EM"/>
    <property type="resolution" value="6.00 A"/>
    <property type="chains" value="A/B/C/D/E/F/G/H/I/J/K/L/M/N/O/P/Q/R/S/T/U/V/W/X/d/e/f/g/h/i=1-222"/>
</dbReference>
<dbReference type="PDB" id="7UNG">
    <property type="method" value="EM"/>
    <property type="resolution" value="3.60 A"/>
    <property type="chains" value="F0/F1/F2/F3/F4/F5/F6/F7/F8/G0/G1/G2/G3/G4/G5/G6/G7/G8/H0/H1/H2=1-222"/>
</dbReference>
<dbReference type="PDB" id="8J07">
    <property type="method" value="EM"/>
    <property type="resolution" value="4.10 A"/>
    <property type="chains" value="6A/6C/6E/6G/6I/6K/6L/6N/6O/6Q/6R/6T/6V=1-222"/>
</dbReference>
<dbReference type="PDBsum" id="7UN1"/>
<dbReference type="PDBsum" id="7UNG"/>
<dbReference type="PDBsum" id="8J07"/>
<dbReference type="EMDB" id="EMD-26611"/>
<dbReference type="EMDB" id="EMD-26624"/>
<dbReference type="EMDB" id="EMD-35888"/>
<dbReference type="SMR" id="Q96E40"/>
<dbReference type="BioGRID" id="116273">
    <property type="interactions" value="21"/>
</dbReference>
<dbReference type="FunCoup" id="Q96E40">
    <property type="interactions" value="56"/>
</dbReference>
<dbReference type="IntAct" id="Q96E40">
    <property type="interactions" value="18"/>
</dbReference>
<dbReference type="MINT" id="Q96E40"/>
<dbReference type="STRING" id="9606.ENSP00000361209"/>
<dbReference type="iPTMnet" id="Q96E40"/>
<dbReference type="PhosphoSitePlus" id="Q96E40"/>
<dbReference type="BioMuta" id="SPACA9"/>
<dbReference type="DMDM" id="68565255"/>
<dbReference type="jPOST" id="Q96E40"/>
<dbReference type="MassIVE" id="Q96E40"/>
<dbReference type="PaxDb" id="9606-ENSP00000298546"/>
<dbReference type="PeptideAtlas" id="Q96E40"/>
<dbReference type="ProteomicsDB" id="76371">
    <molecule id="Q96E40-1"/>
</dbReference>
<dbReference type="ProteomicsDB" id="76372">
    <molecule id="Q96E40-2"/>
</dbReference>
<dbReference type="Antibodypedia" id="18219">
    <property type="antibodies" value="54 antibodies from 14 providers"/>
</dbReference>
<dbReference type="DNASU" id="11092"/>
<dbReference type="Ensembl" id="ENST00000350499.6">
    <molecule id="Q96E40-2"/>
    <property type="protein sequence ID" value="ENSP00000298546.7"/>
    <property type="gene ID" value="ENSG00000165698.16"/>
</dbReference>
<dbReference type="Ensembl" id="ENST00000356311.10">
    <molecule id="Q96E40-1"/>
    <property type="protein sequence ID" value="ENSP00000348659.5"/>
    <property type="gene ID" value="ENSG00000165698.16"/>
</dbReference>
<dbReference type="Ensembl" id="ENST00000372136.7">
    <molecule id="Q96E40-1"/>
    <property type="protein sequence ID" value="ENSP00000361209.3"/>
    <property type="gene ID" value="ENSG00000165698.16"/>
</dbReference>
<dbReference type="GeneID" id="11092"/>
<dbReference type="KEGG" id="hsa:11092"/>
<dbReference type="MANE-Select" id="ENST00000356311.10">
    <property type="protein sequence ID" value="ENSP00000348659.5"/>
    <property type="RefSeq nucleotide sequence ID" value="NM_001316897.2"/>
    <property type="RefSeq protein sequence ID" value="NP_001303826.1"/>
</dbReference>
<dbReference type="UCSC" id="uc004cbx.2">
    <molecule id="Q96E40-1"/>
    <property type="organism name" value="human"/>
</dbReference>
<dbReference type="AGR" id="HGNC:1367"/>
<dbReference type="CTD" id="11092"/>
<dbReference type="DisGeNET" id="11092"/>
<dbReference type="GeneCards" id="SPACA9"/>
<dbReference type="HGNC" id="HGNC:1367">
    <property type="gene designation" value="SPACA9"/>
</dbReference>
<dbReference type="HPA" id="ENSG00000165698">
    <property type="expression patterns" value="Group enriched (epididymis, fallopian tube, testis)"/>
</dbReference>
<dbReference type="MIM" id="618552">
    <property type="type" value="gene"/>
</dbReference>
<dbReference type="neXtProt" id="NX_Q96E40"/>
<dbReference type="OpenTargets" id="ENSG00000165698"/>
<dbReference type="PharmGKB" id="PA25983"/>
<dbReference type="VEuPathDB" id="HostDB:ENSG00000165698"/>
<dbReference type="eggNOG" id="ENOG502QQV9">
    <property type="taxonomic scope" value="Eukaryota"/>
</dbReference>
<dbReference type="GeneTree" id="ENSGT00390000007746"/>
<dbReference type="HOGENOM" id="CLU_100443_0_0_1"/>
<dbReference type="InParanoid" id="Q96E40"/>
<dbReference type="OMA" id="EHHCYNS"/>
<dbReference type="OrthoDB" id="9999829at2759"/>
<dbReference type="PAN-GO" id="Q96E40">
    <property type="GO annotations" value="3 GO annotations based on evolutionary models"/>
</dbReference>
<dbReference type="PhylomeDB" id="Q96E40"/>
<dbReference type="TreeFam" id="TF328897"/>
<dbReference type="PathwayCommons" id="Q96E40"/>
<dbReference type="SignaLink" id="Q96E40"/>
<dbReference type="BioGRID-ORCS" id="11092">
    <property type="hits" value="17 hits in 1131 CRISPR screens"/>
</dbReference>
<dbReference type="ChiTaRS" id="SPACA9">
    <property type="organism name" value="human"/>
</dbReference>
<dbReference type="GenomeRNAi" id="11092"/>
<dbReference type="Pharos" id="Q96E40">
    <property type="development level" value="Tdark"/>
</dbReference>
<dbReference type="PRO" id="PR:Q96E40"/>
<dbReference type="Proteomes" id="UP000005640">
    <property type="component" value="Chromosome 9"/>
</dbReference>
<dbReference type="RNAct" id="Q96E40">
    <property type="molecule type" value="protein"/>
</dbReference>
<dbReference type="Bgee" id="ENSG00000165698">
    <property type="expression patterns" value="Expressed in left testis and 162 other cell types or tissues"/>
</dbReference>
<dbReference type="ExpressionAtlas" id="Q96E40">
    <property type="expression patterns" value="baseline and differential"/>
</dbReference>
<dbReference type="GO" id="GO:0001669">
    <property type="term" value="C:acrosomal vesicle"/>
    <property type="evidence" value="ECO:0000318"/>
    <property type="project" value="GO_Central"/>
</dbReference>
<dbReference type="GO" id="GO:0005879">
    <property type="term" value="C:axonemal microtubule"/>
    <property type="evidence" value="ECO:0000314"/>
    <property type="project" value="UniProtKB"/>
</dbReference>
<dbReference type="GO" id="GO:0160110">
    <property type="term" value="C:axonemal microtubule doublet inner sheath"/>
    <property type="evidence" value="ECO:0000250"/>
    <property type="project" value="UniProtKB"/>
</dbReference>
<dbReference type="GO" id="GO:0036064">
    <property type="term" value="C:ciliary basal body"/>
    <property type="evidence" value="ECO:0000250"/>
    <property type="project" value="UniProtKB"/>
</dbReference>
<dbReference type="GO" id="GO:0097546">
    <property type="term" value="C:ciliary base"/>
    <property type="evidence" value="ECO:0000318"/>
    <property type="project" value="GO_Central"/>
</dbReference>
<dbReference type="GO" id="GO:0005881">
    <property type="term" value="C:cytoplasmic microtubule"/>
    <property type="evidence" value="ECO:0000314"/>
    <property type="project" value="UniProtKB"/>
</dbReference>
<dbReference type="GO" id="GO:0005634">
    <property type="term" value="C:nucleus"/>
    <property type="evidence" value="ECO:0000250"/>
    <property type="project" value="UniProtKB"/>
</dbReference>
<dbReference type="GO" id="GO:0036126">
    <property type="term" value="C:sperm flagellum"/>
    <property type="evidence" value="ECO:0000318"/>
    <property type="project" value="GO_Central"/>
</dbReference>
<dbReference type="GO" id="GO:0048306">
    <property type="term" value="F:calcium-dependent protein binding"/>
    <property type="evidence" value="ECO:0007669"/>
    <property type="project" value="Ensembl"/>
</dbReference>
<dbReference type="GO" id="GO:0008017">
    <property type="term" value="F:microtubule binding"/>
    <property type="evidence" value="ECO:0000314"/>
    <property type="project" value="UniProtKB"/>
</dbReference>
<dbReference type="GO" id="GO:0035082">
    <property type="term" value="P:axoneme assembly"/>
    <property type="evidence" value="ECO:0000314"/>
    <property type="project" value="UniProtKB"/>
</dbReference>
<dbReference type="GO" id="GO:0030317">
    <property type="term" value="P:flagellated sperm motility"/>
    <property type="evidence" value="ECO:0007669"/>
    <property type="project" value="Ensembl"/>
</dbReference>
<dbReference type="InterPro" id="IPR027818">
    <property type="entry name" value="SPACA9"/>
</dbReference>
<dbReference type="PANTHER" id="PTHR32455">
    <property type="entry name" value="SPERM ACROSOME-ASSOCIATED PROTEIN 9"/>
    <property type="match status" value="1"/>
</dbReference>
<dbReference type="PANTHER" id="PTHR32455:SF1">
    <property type="entry name" value="SPERM ACROSOME-ASSOCIATED PROTEIN 9"/>
    <property type="match status" value="1"/>
</dbReference>
<dbReference type="Pfam" id="PF15120">
    <property type="entry name" value="SPACA9"/>
    <property type="match status" value="1"/>
</dbReference>
<organism>
    <name type="scientific">Homo sapiens</name>
    <name type="common">Human</name>
    <dbReference type="NCBI Taxonomy" id="9606"/>
    <lineage>
        <taxon>Eukaryota</taxon>
        <taxon>Metazoa</taxon>
        <taxon>Chordata</taxon>
        <taxon>Craniata</taxon>
        <taxon>Vertebrata</taxon>
        <taxon>Euteleostomi</taxon>
        <taxon>Mammalia</taxon>
        <taxon>Eutheria</taxon>
        <taxon>Euarchontoglires</taxon>
        <taxon>Primates</taxon>
        <taxon>Haplorrhini</taxon>
        <taxon>Catarrhini</taxon>
        <taxon>Hominidae</taxon>
        <taxon>Homo</taxon>
    </lineage>
</organism>
<sequence>MNEVKESLRSIEQKYKLFQQQQLTFTAALEHCRENAHDKIRPISSIGQVQSYMEHYCNSSTDRRVLLMFLDICSELNKLCQHFEAVHSGTPVTNNLLEKCKTLVSQSNDLSSLRAKYPHDVVNHLSCDEARNHYGGVVSLIPLILDLMKEWIAHSEKLPRKVLQHVSEPQAHQESTRGAARPAQAIGTQPRATKHKCRQLTKASLKPRGCSKPPWRPPGGKL</sequence>
<accession>Q96E40</accession>
<accession>Q9UGQ0</accession>
<evidence type="ECO:0000250" key="1">
    <source>
        <dbReference type="UniProtKB" id="Q4V8P4"/>
    </source>
</evidence>
<evidence type="ECO:0000250" key="2">
    <source>
        <dbReference type="UniProtKB" id="Q7TPM5"/>
    </source>
</evidence>
<evidence type="ECO:0000256" key="3">
    <source>
        <dbReference type="SAM" id="MobiDB-lite"/>
    </source>
</evidence>
<evidence type="ECO:0000269" key="4">
    <source>
    </source>
</evidence>
<evidence type="ECO:0000303" key="5">
    <source ref="1"/>
</evidence>
<evidence type="ECO:0000303" key="6">
    <source ref="3"/>
</evidence>
<evidence type="ECO:0000312" key="7">
    <source>
        <dbReference type="HGNC" id="HGNC:1367"/>
    </source>
</evidence>
<evidence type="ECO:0007744" key="8">
    <source>
        <dbReference type="PDB" id="7UNG"/>
    </source>
</evidence>
<gene>
    <name evidence="7" type="primary">SPACA9</name>
    <name type="synonym">C9orf9</name>
</gene>
<protein>
    <recommendedName>
        <fullName>Sperm acrosome-associated protein 9</fullName>
    </recommendedName>
</protein>
<name>SACA9_HUMAN</name>
<feature type="chain" id="PRO_0000089673" description="Sperm acrosome-associated protein 9">
    <location>
        <begin position="1"/>
        <end position="222"/>
    </location>
</feature>
<feature type="region of interest" description="Disordered" evidence="3">
    <location>
        <begin position="164"/>
        <end position="222"/>
    </location>
</feature>
<feature type="site" description="Essential for interaction with INCA1" evidence="1">
    <location>
        <position position="117"/>
    </location>
</feature>
<feature type="site" description="Essential for interaction with INCA1" evidence="1">
    <location>
        <position position="119"/>
    </location>
</feature>
<feature type="splice variant" id="VSP_014456" description="In isoform 2." evidence="5 6">
    <original>VSE</original>
    <variation>GTT</variation>
    <location>
        <begin position="166"/>
        <end position="168"/>
    </location>
</feature>
<feature type="splice variant" id="VSP_014457" description="In isoform 2." evidence="5 6">
    <location>
        <begin position="169"/>
        <end position="222"/>
    </location>
</feature>
<feature type="sequence variant" id="VAR_056817" description="In dbSNP:rs2231406.">
    <original>V</original>
    <variation>I</variation>
    <location>
        <position position="104"/>
    </location>
</feature>
<keyword id="KW-0002">3D-structure</keyword>
<keyword id="KW-0025">Alternative splicing</keyword>
<keyword id="KW-0966">Cell projection</keyword>
<keyword id="KW-0969">Cilium</keyword>
<keyword id="KW-0963">Cytoplasm</keyword>
<keyword id="KW-0968">Cytoplasmic vesicle</keyword>
<keyword id="KW-0206">Cytoskeleton</keyword>
<keyword id="KW-0282">Flagellum</keyword>
<keyword id="KW-0539">Nucleus</keyword>
<keyword id="KW-1267">Proteomics identification</keyword>
<keyword id="KW-1185">Reference proteome</keyword>
<proteinExistence type="evidence at protein level"/>
<comment type="function">
    <text evidence="2 4">Microtubule inner protein (MIP) part of the dynein-decorated doublet microtubules (DMTs) of multiciliated respiratory cells and the distal singlet microtubules of monoflagellated spermatozoa (PubMed:36191189). Forms an extensive interaction network cross-linking the lumen of axonemal doublet microtubules (By similarity).</text>
</comment>
<comment type="subunit">
    <text evidence="1 2 4">Microtubule inner protein component of sperm flagellar doublet microtubules (PubMed:36191189). Interacts with CABP1 and CALR (By similarity). Interacts with INCA1 (By similarity). Interacts with microtubules (By similarity) (PubMed:36191189).</text>
</comment>
<comment type="interaction">
    <interactant intactId="EBI-722584">
        <id>Q96E40</id>
    </interactant>
    <interactant intactId="EBI-743414">
        <id>O95967</id>
        <label>EFEMP2</label>
    </interactant>
    <organismsDiffer>false</organismsDiffer>
    <experiments>3</experiments>
</comment>
<comment type="interaction">
    <interactant intactId="EBI-722584">
        <id>Q96E40</id>
    </interactant>
    <interactant intactId="EBI-949824">
        <id>O00471</id>
        <label>EXOC5</label>
    </interactant>
    <organismsDiffer>false</organismsDiffer>
    <experiments>3</experiments>
</comment>
<comment type="interaction">
    <interactant intactId="EBI-722584">
        <id>Q96E40</id>
    </interactant>
    <interactant intactId="EBI-11959885">
        <id>Q07627</id>
        <label>KRTAP1-1</label>
    </interactant>
    <organismsDiffer>false</organismsDiffer>
    <experiments>3</experiments>
</comment>
<comment type="interaction">
    <interactant intactId="EBI-722584">
        <id>Q96E40</id>
    </interactant>
    <interactant intactId="EBI-10172150">
        <id>P60370</id>
        <label>KRTAP10-5</label>
    </interactant>
    <organismsDiffer>false</organismsDiffer>
    <experiments>3</experiments>
</comment>
<comment type="interaction">
    <interactant intactId="EBI-722584">
        <id>Q96E40</id>
    </interactant>
    <interactant intactId="EBI-10172290">
        <id>P60409</id>
        <label>KRTAP10-7</label>
    </interactant>
    <organismsDiffer>false</organismsDiffer>
    <experiments>3</experiments>
</comment>
<comment type="interaction">
    <interactant intactId="EBI-722584">
        <id>Q96E40</id>
    </interactant>
    <interactant intactId="EBI-10171774">
        <id>P60410</id>
        <label>KRTAP10-8</label>
    </interactant>
    <organismsDiffer>false</organismsDiffer>
    <experiments>3</experiments>
</comment>
<comment type="interaction">
    <interactant intactId="EBI-722584">
        <id>Q96E40</id>
    </interactant>
    <interactant intactId="EBI-10172052">
        <id>P60411</id>
        <label>KRTAP10-9</label>
    </interactant>
    <organismsDiffer>false</organismsDiffer>
    <experiments>3</experiments>
</comment>
<comment type="subcellular location">
    <subcellularLocation>
        <location evidence="2">Cytoplasm</location>
    </subcellularLocation>
    <subcellularLocation>
        <location evidence="2">Cytoplasmic vesicle</location>
        <location evidence="2">Secretory vesicle</location>
        <location evidence="2">Acrosome</location>
    </subcellularLocation>
    <subcellularLocation>
        <location evidence="2">Cytoplasm</location>
        <location evidence="2">Cytoskeleton</location>
        <location evidence="2">Cilium basal body</location>
    </subcellularLocation>
    <subcellularLocation>
        <location evidence="2">Cytoplasm</location>
        <location evidence="2">Cytoskeleton</location>
        <location evidence="2">Flagellum axoneme</location>
    </subcellularLocation>
    <subcellularLocation>
        <location evidence="4">Cytoplasm</location>
        <location evidence="4">Cytoskeleton</location>
        <location evidence="4">Cilium axoneme</location>
    </subcellularLocation>
    <subcellularLocation>
        <location evidence="1">Nucleus</location>
    </subcellularLocation>
    <text evidence="2">In caudal sperms localizes onto sperm head. Is also present on midpiece and principle piece of sperm tails. Acrosome and sperm tail localization is regulated by Y-chromosome.</text>
</comment>
<comment type="alternative products">
    <event type="alternative splicing"/>
    <isoform>
        <id>Q96E40-1</id>
        <name>1</name>
        <sequence type="displayed"/>
    </isoform>
    <isoform>
        <id>Q96E40-2</id>
        <name>2</name>
        <sequence type="described" ref="VSP_014456 VSP_014457"/>
    </isoform>
</comment>